<organism>
    <name type="scientific">Mus musculus</name>
    <name type="common">Mouse</name>
    <dbReference type="NCBI Taxonomy" id="10090"/>
    <lineage>
        <taxon>Eukaryota</taxon>
        <taxon>Metazoa</taxon>
        <taxon>Chordata</taxon>
        <taxon>Craniata</taxon>
        <taxon>Vertebrata</taxon>
        <taxon>Euteleostomi</taxon>
        <taxon>Mammalia</taxon>
        <taxon>Eutheria</taxon>
        <taxon>Euarchontoglires</taxon>
        <taxon>Glires</taxon>
        <taxon>Rodentia</taxon>
        <taxon>Myomorpha</taxon>
        <taxon>Muroidea</taxon>
        <taxon>Muridae</taxon>
        <taxon>Murinae</taxon>
        <taxon>Mus</taxon>
        <taxon>Mus</taxon>
    </lineage>
</organism>
<feature type="chain" id="PRO_0000209827" description="Calcium-binding protein 39-like">
    <location>
        <begin position="1"/>
        <end position="337"/>
    </location>
</feature>
<feature type="splice variant" id="VSP_007417" description="In isoform 2." evidence="2">
    <original>VFVASPHKTQPIVEILLK</original>
    <variation>NSVFITNRIHGLKRWLSS</variation>
    <location>
        <begin position="279"/>
        <end position="296"/>
    </location>
</feature>
<feature type="splice variant" id="VSP_007418" description="In isoform 2." evidence="2">
    <location>
        <begin position="297"/>
        <end position="337"/>
    </location>
</feature>
<feature type="sequence conflict" description="In Ref. 1; BAB23953." evidence="3" ref="1">
    <original>S</original>
    <variation>P</variation>
    <location>
        <position position="45"/>
    </location>
</feature>
<feature type="sequence conflict" description="In Ref. 2; AAH16546." evidence="3" ref="2">
    <original>L</original>
    <variation>R</variation>
    <location>
        <position position="232"/>
    </location>
</feature>
<proteinExistence type="evidence at protein level"/>
<keyword id="KW-0025">Alternative splicing</keyword>
<keyword id="KW-1185">Reference proteome</keyword>
<sequence>MKKMPLFSKSHKNPAEIVKILKDNLAILEKQDKKTDKASEEVSKSLQAMKEILCGTNDKEPPTEAVAQLAQELYSSGLLVTLIADLQLIDFEGKKDVTQIFNNILRRQIGTRCPTVEYISSHPHILFMLLKGYEAPQIALRCGIMLRECIRHEPLAKIILFSNQFRDFFKYVELSTFDIASDAFATFKDLLTRHKVLVADFLEQNYDTIFEDYEKLLQSENYVTKRQSLKLLGELILDRHNFTIMTKYISKPENLKLMMNLLRDKSPNIQFEAFHVFKVFVASPHKTQPIVEILLKNQPKLIEFLSSFQKERTDDEQFADEKNYLIKQIRDLKKAAP</sequence>
<protein>
    <recommendedName>
        <fullName>Calcium-binding protein 39-like</fullName>
    </recommendedName>
    <alternativeName>
        <fullName>MO25beta</fullName>
    </alternativeName>
    <alternativeName>
        <fullName>Mo25-like protein</fullName>
    </alternativeName>
</protein>
<accession>Q9DB16</accession>
<accession>Q8BG52</accession>
<accession>Q91WB8</accession>
<accession>Q91YL0</accession>
<comment type="function">
    <text evidence="1">Component of a complex that binds and activates STK11/LKB1. In the complex, required to stabilize the interaction between CAB39/MO25 (CAB39/MO25alpha or CAB39L/MO25beta) and STK11/LKB1 (By similarity).</text>
</comment>
<comment type="subunit">
    <text evidence="1">Component of a trimeric complex composed of STK11/LKB1, STRAD (STRADA or STRADB) and CAB39/MO25 (CAB39/MO25alpha or CAB39L/MO25beta): the complex tethers STK11/LKB1 in the cytoplasm and stimulates its catalytic activity.</text>
</comment>
<comment type="alternative products">
    <event type="alternative splicing"/>
    <isoform>
        <id>Q9DB16-1</id>
        <name>1</name>
        <sequence type="displayed"/>
    </isoform>
    <isoform>
        <id>Q9DB16-2</id>
        <name>2</name>
        <sequence type="described" ref="VSP_007417 VSP_007418"/>
    </isoform>
</comment>
<comment type="similarity">
    <text evidence="3">Belongs to the Mo25 family.</text>
</comment>
<comment type="sequence caution" evidence="3">
    <conflict type="erroneous initiation">
        <sequence resource="EMBL-CDS" id="AAH16128"/>
    </conflict>
</comment>
<evidence type="ECO:0000250" key="1"/>
<evidence type="ECO:0000303" key="2">
    <source>
    </source>
</evidence>
<evidence type="ECO:0000305" key="3"/>
<name>CB39L_MOUSE</name>
<reference key="1">
    <citation type="journal article" date="2005" name="Science">
        <title>The transcriptional landscape of the mammalian genome.</title>
        <authorList>
            <person name="Carninci P."/>
            <person name="Kasukawa T."/>
            <person name="Katayama S."/>
            <person name="Gough J."/>
            <person name="Frith M.C."/>
            <person name="Maeda N."/>
            <person name="Oyama R."/>
            <person name="Ravasi T."/>
            <person name="Lenhard B."/>
            <person name="Wells C."/>
            <person name="Kodzius R."/>
            <person name="Shimokawa K."/>
            <person name="Bajic V.B."/>
            <person name="Brenner S.E."/>
            <person name="Batalov S."/>
            <person name="Forrest A.R."/>
            <person name="Zavolan M."/>
            <person name="Davis M.J."/>
            <person name="Wilming L.G."/>
            <person name="Aidinis V."/>
            <person name="Allen J.E."/>
            <person name="Ambesi-Impiombato A."/>
            <person name="Apweiler R."/>
            <person name="Aturaliya R.N."/>
            <person name="Bailey T.L."/>
            <person name="Bansal M."/>
            <person name="Baxter L."/>
            <person name="Beisel K.W."/>
            <person name="Bersano T."/>
            <person name="Bono H."/>
            <person name="Chalk A.M."/>
            <person name="Chiu K.P."/>
            <person name="Choudhary V."/>
            <person name="Christoffels A."/>
            <person name="Clutterbuck D.R."/>
            <person name="Crowe M.L."/>
            <person name="Dalla E."/>
            <person name="Dalrymple B.P."/>
            <person name="de Bono B."/>
            <person name="Della Gatta G."/>
            <person name="di Bernardo D."/>
            <person name="Down T."/>
            <person name="Engstrom P."/>
            <person name="Fagiolini M."/>
            <person name="Faulkner G."/>
            <person name="Fletcher C.F."/>
            <person name="Fukushima T."/>
            <person name="Furuno M."/>
            <person name="Futaki S."/>
            <person name="Gariboldi M."/>
            <person name="Georgii-Hemming P."/>
            <person name="Gingeras T.R."/>
            <person name="Gojobori T."/>
            <person name="Green R.E."/>
            <person name="Gustincich S."/>
            <person name="Harbers M."/>
            <person name="Hayashi Y."/>
            <person name="Hensch T.K."/>
            <person name="Hirokawa N."/>
            <person name="Hill D."/>
            <person name="Huminiecki L."/>
            <person name="Iacono M."/>
            <person name="Ikeo K."/>
            <person name="Iwama A."/>
            <person name="Ishikawa T."/>
            <person name="Jakt M."/>
            <person name="Kanapin A."/>
            <person name="Katoh M."/>
            <person name="Kawasawa Y."/>
            <person name="Kelso J."/>
            <person name="Kitamura H."/>
            <person name="Kitano H."/>
            <person name="Kollias G."/>
            <person name="Krishnan S.P."/>
            <person name="Kruger A."/>
            <person name="Kummerfeld S.K."/>
            <person name="Kurochkin I.V."/>
            <person name="Lareau L.F."/>
            <person name="Lazarevic D."/>
            <person name="Lipovich L."/>
            <person name="Liu J."/>
            <person name="Liuni S."/>
            <person name="McWilliam S."/>
            <person name="Madan Babu M."/>
            <person name="Madera M."/>
            <person name="Marchionni L."/>
            <person name="Matsuda H."/>
            <person name="Matsuzawa S."/>
            <person name="Miki H."/>
            <person name="Mignone F."/>
            <person name="Miyake S."/>
            <person name="Morris K."/>
            <person name="Mottagui-Tabar S."/>
            <person name="Mulder N."/>
            <person name="Nakano N."/>
            <person name="Nakauchi H."/>
            <person name="Ng P."/>
            <person name="Nilsson R."/>
            <person name="Nishiguchi S."/>
            <person name="Nishikawa S."/>
            <person name="Nori F."/>
            <person name="Ohara O."/>
            <person name="Okazaki Y."/>
            <person name="Orlando V."/>
            <person name="Pang K.C."/>
            <person name="Pavan W.J."/>
            <person name="Pavesi G."/>
            <person name="Pesole G."/>
            <person name="Petrovsky N."/>
            <person name="Piazza S."/>
            <person name="Reed J."/>
            <person name="Reid J.F."/>
            <person name="Ring B.Z."/>
            <person name="Ringwald M."/>
            <person name="Rost B."/>
            <person name="Ruan Y."/>
            <person name="Salzberg S.L."/>
            <person name="Sandelin A."/>
            <person name="Schneider C."/>
            <person name="Schoenbach C."/>
            <person name="Sekiguchi K."/>
            <person name="Semple C.A."/>
            <person name="Seno S."/>
            <person name="Sessa L."/>
            <person name="Sheng Y."/>
            <person name="Shibata Y."/>
            <person name="Shimada H."/>
            <person name="Shimada K."/>
            <person name="Silva D."/>
            <person name="Sinclair B."/>
            <person name="Sperling S."/>
            <person name="Stupka E."/>
            <person name="Sugiura K."/>
            <person name="Sultana R."/>
            <person name="Takenaka Y."/>
            <person name="Taki K."/>
            <person name="Tammoja K."/>
            <person name="Tan S.L."/>
            <person name="Tang S."/>
            <person name="Taylor M.S."/>
            <person name="Tegner J."/>
            <person name="Teichmann S.A."/>
            <person name="Ueda H.R."/>
            <person name="van Nimwegen E."/>
            <person name="Verardo R."/>
            <person name="Wei C.L."/>
            <person name="Yagi K."/>
            <person name="Yamanishi H."/>
            <person name="Zabarovsky E."/>
            <person name="Zhu S."/>
            <person name="Zimmer A."/>
            <person name="Hide W."/>
            <person name="Bult C."/>
            <person name="Grimmond S.M."/>
            <person name="Teasdale R.D."/>
            <person name="Liu E.T."/>
            <person name="Brusic V."/>
            <person name="Quackenbush J."/>
            <person name="Wahlestedt C."/>
            <person name="Mattick J.S."/>
            <person name="Hume D.A."/>
            <person name="Kai C."/>
            <person name="Sasaki D."/>
            <person name="Tomaru Y."/>
            <person name="Fukuda S."/>
            <person name="Kanamori-Katayama M."/>
            <person name="Suzuki M."/>
            <person name="Aoki J."/>
            <person name="Arakawa T."/>
            <person name="Iida J."/>
            <person name="Imamura K."/>
            <person name="Itoh M."/>
            <person name="Kato T."/>
            <person name="Kawaji H."/>
            <person name="Kawagashira N."/>
            <person name="Kawashima T."/>
            <person name="Kojima M."/>
            <person name="Kondo S."/>
            <person name="Konno H."/>
            <person name="Nakano K."/>
            <person name="Ninomiya N."/>
            <person name="Nishio T."/>
            <person name="Okada M."/>
            <person name="Plessy C."/>
            <person name="Shibata K."/>
            <person name="Shiraki T."/>
            <person name="Suzuki S."/>
            <person name="Tagami M."/>
            <person name="Waki K."/>
            <person name="Watahiki A."/>
            <person name="Okamura-Oho Y."/>
            <person name="Suzuki H."/>
            <person name="Kawai J."/>
            <person name="Hayashizaki Y."/>
        </authorList>
    </citation>
    <scope>NUCLEOTIDE SEQUENCE [LARGE SCALE MRNA] (ISOFORMS 1 AND 2)</scope>
    <source>
        <strain>C57BL/6J</strain>
        <tissue>Cerebellum</tissue>
        <tissue>Eye</tissue>
        <tissue>Pituitary</tissue>
        <tissue>Testis</tissue>
    </source>
</reference>
<reference key="2">
    <citation type="journal article" date="2004" name="Genome Res.">
        <title>The status, quality, and expansion of the NIH full-length cDNA project: the Mammalian Gene Collection (MGC).</title>
        <authorList>
            <consortium name="The MGC Project Team"/>
        </authorList>
    </citation>
    <scope>NUCLEOTIDE SEQUENCE [LARGE SCALE MRNA] (ISOFORM 1)</scope>
    <source>
        <strain>FVB/N</strain>
        <tissue>Mammary gland</tissue>
        <tissue>Salivary gland</tissue>
    </source>
</reference>
<reference key="3">
    <citation type="journal article" date="2010" name="Cell">
        <title>A tissue-specific atlas of mouse protein phosphorylation and expression.</title>
        <authorList>
            <person name="Huttlin E.L."/>
            <person name="Jedrychowski M.P."/>
            <person name="Elias J.E."/>
            <person name="Goswami T."/>
            <person name="Rad R."/>
            <person name="Beausoleil S.A."/>
            <person name="Villen J."/>
            <person name="Haas W."/>
            <person name="Sowa M.E."/>
            <person name="Gygi S.P."/>
        </authorList>
    </citation>
    <scope>IDENTIFICATION BY MASS SPECTROMETRY [LARGE SCALE ANALYSIS]</scope>
    <source>
        <tissue>Brain</tissue>
        <tissue>Kidney</tissue>
        <tissue>Liver</tissue>
        <tissue>Lung</tissue>
        <tissue>Pancreas</tissue>
        <tissue>Spleen</tissue>
        <tissue>Testis</tissue>
    </source>
</reference>
<dbReference type="EMBL" id="AK005323">
    <property type="protein sequence ID" value="BAB23953.2"/>
    <property type="molecule type" value="mRNA"/>
</dbReference>
<dbReference type="EMBL" id="AK030474">
    <property type="protein sequence ID" value="BAC26978.1"/>
    <property type="molecule type" value="mRNA"/>
</dbReference>
<dbReference type="EMBL" id="AK053642">
    <property type="protein sequence ID" value="BAC35457.1"/>
    <property type="molecule type" value="mRNA"/>
</dbReference>
<dbReference type="EMBL" id="AK076758">
    <property type="protein sequence ID" value="BAC36470.1"/>
    <property type="molecule type" value="mRNA"/>
</dbReference>
<dbReference type="EMBL" id="AK076867">
    <property type="protein sequence ID" value="BAC36513.1"/>
    <property type="molecule type" value="mRNA"/>
</dbReference>
<dbReference type="EMBL" id="BC016128">
    <property type="protein sequence ID" value="AAH16128.1"/>
    <property type="status" value="ALT_INIT"/>
    <property type="molecule type" value="mRNA"/>
</dbReference>
<dbReference type="EMBL" id="BC016546">
    <property type="protein sequence ID" value="AAH16546.2"/>
    <property type="molecule type" value="mRNA"/>
</dbReference>
<dbReference type="CCDS" id="CCDS27171.1">
    <molecule id="Q9DB16-1"/>
</dbReference>
<dbReference type="RefSeq" id="NP_001347520.1">
    <molecule id="Q9DB16-1"/>
    <property type="nucleotide sequence ID" value="NM_001360591.1"/>
</dbReference>
<dbReference type="RefSeq" id="NP_001347521.1">
    <molecule id="Q9DB16-1"/>
    <property type="nucleotide sequence ID" value="NM_001360592.1"/>
</dbReference>
<dbReference type="RefSeq" id="NP_001347522.1">
    <molecule id="Q9DB16-1"/>
    <property type="nucleotide sequence ID" value="NM_001360593.1"/>
</dbReference>
<dbReference type="RefSeq" id="NP_081184.3">
    <molecule id="Q9DB16-1"/>
    <property type="nucleotide sequence ID" value="NM_026908.3"/>
</dbReference>
<dbReference type="RefSeq" id="XP_006519557.1">
    <property type="nucleotide sequence ID" value="XM_006519494.2"/>
</dbReference>
<dbReference type="RefSeq" id="XP_006519558.1">
    <property type="nucleotide sequence ID" value="XM_006519495.2"/>
</dbReference>
<dbReference type="RefSeq" id="XP_017171665.1">
    <property type="nucleotide sequence ID" value="XM_017316176.1"/>
</dbReference>
<dbReference type="RefSeq" id="XP_036014730.1">
    <molecule id="Q9DB16-1"/>
    <property type="nucleotide sequence ID" value="XM_036158837.1"/>
</dbReference>
<dbReference type="RefSeq" id="XP_036014731.1">
    <molecule id="Q9DB16-1"/>
    <property type="nucleotide sequence ID" value="XM_036158838.1"/>
</dbReference>
<dbReference type="SMR" id="Q9DB16"/>
<dbReference type="BioGRID" id="213169">
    <property type="interactions" value="10"/>
</dbReference>
<dbReference type="FunCoup" id="Q9DB16">
    <property type="interactions" value="2368"/>
</dbReference>
<dbReference type="STRING" id="10090.ENSMUSP00000022553"/>
<dbReference type="iPTMnet" id="Q9DB16"/>
<dbReference type="PhosphoSitePlus" id="Q9DB16"/>
<dbReference type="SwissPalm" id="Q9DB16"/>
<dbReference type="jPOST" id="Q9DB16"/>
<dbReference type="PaxDb" id="10090-ENSMUSP00000022553"/>
<dbReference type="PeptideAtlas" id="Q9DB16"/>
<dbReference type="ProteomicsDB" id="283687">
    <molecule id="Q9DB16-1"/>
</dbReference>
<dbReference type="ProteomicsDB" id="283688">
    <molecule id="Q9DB16-2"/>
</dbReference>
<dbReference type="Pumba" id="Q9DB16"/>
<dbReference type="Antibodypedia" id="23903">
    <property type="antibodies" value="182 antibodies from 30 providers"/>
</dbReference>
<dbReference type="DNASU" id="69008"/>
<dbReference type="Ensembl" id="ENSMUST00000022553.6">
    <molecule id="Q9DB16-1"/>
    <property type="protein sequence ID" value="ENSMUSP00000022553.6"/>
    <property type="gene ID" value="ENSMUSG00000021981.11"/>
</dbReference>
<dbReference type="Ensembl" id="ENSMUST00000225595.2">
    <molecule id="Q9DB16-2"/>
    <property type="protein sequence ID" value="ENSMUSP00000153643.2"/>
    <property type="gene ID" value="ENSMUSG00000021981.11"/>
</dbReference>
<dbReference type="GeneID" id="69008"/>
<dbReference type="KEGG" id="mmu:69008"/>
<dbReference type="UCSC" id="uc007uek.1">
    <molecule id="Q9DB16-1"/>
    <property type="organism name" value="mouse"/>
</dbReference>
<dbReference type="AGR" id="MGI:1914081"/>
<dbReference type="CTD" id="81617"/>
<dbReference type="MGI" id="MGI:1914081">
    <property type="gene designation" value="Cab39l"/>
</dbReference>
<dbReference type="VEuPathDB" id="HostDB:ENSMUSG00000021981"/>
<dbReference type="eggNOG" id="KOG1566">
    <property type="taxonomic scope" value="Eukaryota"/>
</dbReference>
<dbReference type="GeneTree" id="ENSGT00390000004360"/>
<dbReference type="HOGENOM" id="CLU_035755_0_0_1"/>
<dbReference type="InParanoid" id="Q9DB16"/>
<dbReference type="OMA" id="HYNEFTR"/>
<dbReference type="PhylomeDB" id="Q9DB16"/>
<dbReference type="TreeFam" id="TF314910"/>
<dbReference type="Reactome" id="R-MMU-380972">
    <property type="pathway name" value="Energy dependent regulation of mTOR by LKB1-AMPK"/>
</dbReference>
<dbReference type="BioGRID-ORCS" id="69008">
    <property type="hits" value="1 hit in 76 CRISPR screens"/>
</dbReference>
<dbReference type="ChiTaRS" id="Cab39l">
    <property type="organism name" value="mouse"/>
</dbReference>
<dbReference type="PRO" id="PR:Q9DB16"/>
<dbReference type="Proteomes" id="UP000000589">
    <property type="component" value="Chromosome 14"/>
</dbReference>
<dbReference type="RNAct" id="Q9DB16">
    <property type="molecule type" value="protein"/>
</dbReference>
<dbReference type="Bgee" id="ENSMUSG00000021981">
    <property type="expression patterns" value="Expressed in choroid plexus epithelium and 262 other cell types or tissues"/>
</dbReference>
<dbReference type="ExpressionAtlas" id="Q9DB16">
    <property type="expression patterns" value="baseline and differential"/>
</dbReference>
<dbReference type="FunFam" id="1.25.10.10:FF:000025">
    <property type="entry name" value="Calcium-binding protein 39"/>
    <property type="match status" value="1"/>
</dbReference>
<dbReference type="Gene3D" id="1.25.10.10">
    <property type="entry name" value="Leucine-rich Repeat Variant"/>
    <property type="match status" value="1"/>
</dbReference>
<dbReference type="InterPro" id="IPR011989">
    <property type="entry name" value="ARM-like"/>
</dbReference>
<dbReference type="InterPro" id="IPR016024">
    <property type="entry name" value="ARM-type_fold"/>
</dbReference>
<dbReference type="InterPro" id="IPR013878">
    <property type="entry name" value="Mo25"/>
</dbReference>
<dbReference type="PANTHER" id="PTHR10182:SF9">
    <property type="entry name" value="CALCIUM-BINDING PROTEIN 39-LIKE"/>
    <property type="match status" value="1"/>
</dbReference>
<dbReference type="PANTHER" id="PTHR10182">
    <property type="entry name" value="CALCIUM-BINDING PROTEIN 39-RELATED"/>
    <property type="match status" value="1"/>
</dbReference>
<dbReference type="Pfam" id="PF08569">
    <property type="entry name" value="Mo25"/>
    <property type="match status" value="1"/>
</dbReference>
<dbReference type="SUPFAM" id="SSF48371">
    <property type="entry name" value="ARM repeat"/>
    <property type="match status" value="1"/>
</dbReference>
<gene>
    <name type="primary">Cab39l</name>
</gene>